<evidence type="ECO:0000255" key="1">
    <source>
        <dbReference type="HAMAP-Rule" id="MF_01394"/>
    </source>
</evidence>
<organism>
    <name type="scientific">Shigella boydii serotype 4 (strain Sb227)</name>
    <dbReference type="NCBI Taxonomy" id="300268"/>
    <lineage>
        <taxon>Bacteria</taxon>
        <taxon>Pseudomonadati</taxon>
        <taxon>Pseudomonadota</taxon>
        <taxon>Gammaproteobacteria</taxon>
        <taxon>Enterobacterales</taxon>
        <taxon>Enterobacteriaceae</taxon>
        <taxon>Shigella</taxon>
    </lineage>
</organism>
<name>NUOA_SHIBS</name>
<accession>Q31YH3</accession>
<protein>
    <recommendedName>
        <fullName evidence="1">NADH-quinone oxidoreductase subunit A</fullName>
        <ecNumber evidence="1">7.1.1.-</ecNumber>
    </recommendedName>
    <alternativeName>
        <fullName evidence="1">NADH dehydrogenase I subunit A</fullName>
    </alternativeName>
    <alternativeName>
        <fullName evidence="1">NDH-1 subunit A</fullName>
    </alternativeName>
    <alternativeName>
        <fullName evidence="1">NUO1</fullName>
    </alternativeName>
</protein>
<dbReference type="EC" id="7.1.1.-" evidence="1"/>
<dbReference type="EMBL" id="CP000036">
    <property type="protein sequence ID" value="ABB66885.1"/>
    <property type="molecule type" value="Genomic_DNA"/>
</dbReference>
<dbReference type="RefSeq" id="WP_000062997.1">
    <property type="nucleotide sequence ID" value="NC_007613.1"/>
</dbReference>
<dbReference type="SMR" id="Q31YH3"/>
<dbReference type="GeneID" id="93774886"/>
<dbReference type="KEGG" id="sbo:SBO_2321"/>
<dbReference type="HOGENOM" id="CLU_119549_2_0_6"/>
<dbReference type="Proteomes" id="UP000007067">
    <property type="component" value="Chromosome"/>
</dbReference>
<dbReference type="GO" id="GO:0030964">
    <property type="term" value="C:NADH dehydrogenase complex"/>
    <property type="evidence" value="ECO:0007669"/>
    <property type="project" value="TreeGrafter"/>
</dbReference>
<dbReference type="GO" id="GO:0005886">
    <property type="term" value="C:plasma membrane"/>
    <property type="evidence" value="ECO:0007669"/>
    <property type="project" value="UniProtKB-SubCell"/>
</dbReference>
<dbReference type="GO" id="GO:0008137">
    <property type="term" value="F:NADH dehydrogenase (ubiquinone) activity"/>
    <property type="evidence" value="ECO:0007669"/>
    <property type="project" value="InterPro"/>
</dbReference>
<dbReference type="GO" id="GO:0050136">
    <property type="term" value="F:NADH:ubiquinone reductase (non-electrogenic) activity"/>
    <property type="evidence" value="ECO:0007669"/>
    <property type="project" value="UniProtKB-UniRule"/>
</dbReference>
<dbReference type="GO" id="GO:0048038">
    <property type="term" value="F:quinone binding"/>
    <property type="evidence" value="ECO:0007669"/>
    <property type="project" value="UniProtKB-KW"/>
</dbReference>
<dbReference type="FunFam" id="1.20.58.1610:FF:000003">
    <property type="entry name" value="NADH-quinone oxidoreductase subunit A"/>
    <property type="match status" value="1"/>
</dbReference>
<dbReference type="Gene3D" id="1.20.58.1610">
    <property type="entry name" value="NADH:ubiquinone/plastoquinone oxidoreductase, chain 3"/>
    <property type="match status" value="1"/>
</dbReference>
<dbReference type="HAMAP" id="MF_01394">
    <property type="entry name" value="NDH1_NuoA"/>
    <property type="match status" value="1"/>
</dbReference>
<dbReference type="InterPro" id="IPR023043">
    <property type="entry name" value="NAD(P)H_OxRDtase_bac/plastid"/>
</dbReference>
<dbReference type="InterPro" id="IPR000440">
    <property type="entry name" value="NADH_UbQ/plastoQ_OxRdtase_su3"/>
</dbReference>
<dbReference type="InterPro" id="IPR038430">
    <property type="entry name" value="NDAH_ubi_oxred_su3_sf"/>
</dbReference>
<dbReference type="PANTHER" id="PTHR11058:SF21">
    <property type="entry name" value="NADH-QUINONE OXIDOREDUCTASE SUBUNIT A"/>
    <property type="match status" value="1"/>
</dbReference>
<dbReference type="PANTHER" id="PTHR11058">
    <property type="entry name" value="NADH-UBIQUINONE OXIDOREDUCTASE CHAIN 3"/>
    <property type="match status" value="1"/>
</dbReference>
<dbReference type="Pfam" id="PF00507">
    <property type="entry name" value="Oxidored_q4"/>
    <property type="match status" value="1"/>
</dbReference>
<sequence>MSMSTSTEVIAHHWAFAIFLIVAIGLCCLMLVGGWFLGGRARARSKNVPFESGIDSVGSARLRLSAKFYLVAMFFVIFDVEALYLFAWSTSIRESGWVGFVEAAIFIFVLLAGLVYLVRIGALDWTPARSRRERMNPETNSIANRQR</sequence>
<proteinExistence type="inferred from homology"/>
<reference key="1">
    <citation type="journal article" date="2005" name="Nucleic Acids Res.">
        <title>Genome dynamics and diversity of Shigella species, the etiologic agents of bacillary dysentery.</title>
        <authorList>
            <person name="Yang F."/>
            <person name="Yang J."/>
            <person name="Zhang X."/>
            <person name="Chen L."/>
            <person name="Jiang Y."/>
            <person name="Yan Y."/>
            <person name="Tang X."/>
            <person name="Wang J."/>
            <person name="Xiong Z."/>
            <person name="Dong J."/>
            <person name="Xue Y."/>
            <person name="Zhu Y."/>
            <person name="Xu X."/>
            <person name="Sun L."/>
            <person name="Chen S."/>
            <person name="Nie H."/>
            <person name="Peng J."/>
            <person name="Xu J."/>
            <person name="Wang Y."/>
            <person name="Yuan Z."/>
            <person name="Wen Y."/>
            <person name="Yao Z."/>
            <person name="Shen Y."/>
            <person name="Qiang B."/>
            <person name="Hou Y."/>
            <person name="Yu J."/>
            <person name="Jin Q."/>
        </authorList>
    </citation>
    <scope>NUCLEOTIDE SEQUENCE [LARGE SCALE GENOMIC DNA]</scope>
    <source>
        <strain>Sb227</strain>
    </source>
</reference>
<comment type="function">
    <text evidence="1">NDH-1 shuttles electrons from NADH, via FMN and iron-sulfur (Fe-S) centers, to quinones in the respiratory chain. The immediate electron acceptor for the enzyme in this species is believed to be ubiquinone. Couples the redox reaction to proton translocation (for every two electrons transferred, four hydrogen ions are translocated across the cytoplasmic membrane), and thus conserves the redox energy in a proton gradient.</text>
</comment>
<comment type="catalytic activity">
    <reaction evidence="1">
        <text>a quinone + NADH + 5 H(+)(in) = a quinol + NAD(+) + 4 H(+)(out)</text>
        <dbReference type="Rhea" id="RHEA:57888"/>
        <dbReference type="ChEBI" id="CHEBI:15378"/>
        <dbReference type="ChEBI" id="CHEBI:24646"/>
        <dbReference type="ChEBI" id="CHEBI:57540"/>
        <dbReference type="ChEBI" id="CHEBI:57945"/>
        <dbReference type="ChEBI" id="CHEBI:132124"/>
    </reaction>
</comment>
<comment type="subunit">
    <text evidence="1">NDH-1 is composed of 13 different subunits. Subunits NuoA, H, J, K, L, M, N constitute the membrane sector of the complex.</text>
</comment>
<comment type="subcellular location">
    <subcellularLocation>
        <location evidence="1">Cell inner membrane</location>
        <topology evidence="1">Multi-pass membrane protein</topology>
    </subcellularLocation>
</comment>
<comment type="similarity">
    <text evidence="1">Belongs to the complex I subunit 3 family.</text>
</comment>
<gene>
    <name evidence="1" type="primary">nuoA</name>
    <name type="ordered locus">SBO_2321</name>
</gene>
<keyword id="KW-0997">Cell inner membrane</keyword>
<keyword id="KW-1003">Cell membrane</keyword>
<keyword id="KW-0472">Membrane</keyword>
<keyword id="KW-0520">NAD</keyword>
<keyword id="KW-0874">Quinone</keyword>
<keyword id="KW-1278">Translocase</keyword>
<keyword id="KW-0812">Transmembrane</keyword>
<keyword id="KW-1133">Transmembrane helix</keyword>
<keyword id="KW-0813">Transport</keyword>
<keyword id="KW-0830">Ubiquinone</keyword>
<feature type="chain" id="PRO_0000362779" description="NADH-quinone oxidoreductase subunit A">
    <location>
        <begin position="1"/>
        <end position="147"/>
    </location>
</feature>
<feature type="transmembrane region" description="Helical" evidence="1">
    <location>
        <begin position="16"/>
        <end position="36"/>
    </location>
</feature>
<feature type="transmembrane region" description="Helical" evidence="1">
    <location>
        <begin position="68"/>
        <end position="88"/>
    </location>
</feature>
<feature type="transmembrane region" description="Helical" evidence="1">
    <location>
        <begin position="98"/>
        <end position="118"/>
    </location>
</feature>